<comment type="function">
    <text evidence="1">The RuvA-RuvB-RuvC complex processes Holliday junction (HJ) DNA during genetic recombination and DNA repair, while the RuvA-RuvB complex plays an important role in the rescue of blocked DNA replication forks via replication fork reversal (RFR). RuvA specifically binds to HJ cruciform DNA, conferring on it an open structure. The RuvB hexamer acts as an ATP-dependent pump, pulling dsDNA into and through the RuvAB complex. HJ branch migration allows RuvC to scan DNA until it finds its consensus sequence, where it cleaves and resolves the cruciform DNA.</text>
</comment>
<comment type="subunit">
    <text evidence="1">Homotetramer. Forms an RuvA(8)-RuvB(12)-Holliday junction (HJ) complex. HJ DNA is sandwiched between 2 RuvA tetramers; dsDNA enters through RuvA and exits via RuvB. An RuvB hexamer assembles on each DNA strand where it exits the tetramer. Each RuvB hexamer is contacted by two RuvA subunits (via domain III) on 2 adjacent RuvB subunits; this complex drives branch migration. In the full resolvosome a probable DNA-RuvA(4)-RuvB(12)-RuvC(2) complex forms which resolves the HJ.</text>
</comment>
<comment type="subcellular location">
    <subcellularLocation>
        <location evidence="1">Cytoplasm</location>
    </subcellularLocation>
</comment>
<comment type="domain">
    <text evidence="1">Has three domains with a flexible linker between the domains II and III and assumes an 'L' shape. Domain III is highly mobile and contacts RuvB.</text>
</comment>
<comment type="similarity">
    <text evidence="1">Belongs to the RuvA family.</text>
</comment>
<organism>
    <name type="scientific">Acidobacterium capsulatum (strain ATCC 51196 / DSM 11244 / BCRC 80197 / JCM 7670 / NBRC 15755 / NCIMB 13165 / 161)</name>
    <dbReference type="NCBI Taxonomy" id="240015"/>
    <lineage>
        <taxon>Bacteria</taxon>
        <taxon>Pseudomonadati</taxon>
        <taxon>Acidobacteriota</taxon>
        <taxon>Terriglobia</taxon>
        <taxon>Terriglobales</taxon>
        <taxon>Acidobacteriaceae</taxon>
        <taxon>Acidobacterium</taxon>
    </lineage>
</organism>
<dbReference type="EMBL" id="CP001472">
    <property type="protein sequence ID" value="ACO32860.1"/>
    <property type="molecule type" value="Genomic_DNA"/>
</dbReference>
<dbReference type="RefSeq" id="WP_015897156.1">
    <property type="nucleotide sequence ID" value="NC_012483.1"/>
</dbReference>
<dbReference type="SMR" id="C1F8Z2"/>
<dbReference type="FunCoup" id="C1F8Z2">
    <property type="interactions" value="242"/>
</dbReference>
<dbReference type="STRING" id="240015.ACP_2054"/>
<dbReference type="KEGG" id="aca:ACP_2054"/>
<dbReference type="eggNOG" id="COG0632">
    <property type="taxonomic scope" value="Bacteria"/>
</dbReference>
<dbReference type="HOGENOM" id="CLU_087936_0_0_0"/>
<dbReference type="InParanoid" id="C1F8Z2"/>
<dbReference type="OrthoDB" id="5293449at2"/>
<dbReference type="Proteomes" id="UP000002207">
    <property type="component" value="Chromosome"/>
</dbReference>
<dbReference type="GO" id="GO:0005737">
    <property type="term" value="C:cytoplasm"/>
    <property type="evidence" value="ECO:0007669"/>
    <property type="project" value="UniProtKB-SubCell"/>
</dbReference>
<dbReference type="GO" id="GO:0009379">
    <property type="term" value="C:Holliday junction helicase complex"/>
    <property type="evidence" value="ECO:0007669"/>
    <property type="project" value="InterPro"/>
</dbReference>
<dbReference type="GO" id="GO:0048476">
    <property type="term" value="C:Holliday junction resolvase complex"/>
    <property type="evidence" value="ECO:0007669"/>
    <property type="project" value="UniProtKB-UniRule"/>
</dbReference>
<dbReference type="GO" id="GO:0005524">
    <property type="term" value="F:ATP binding"/>
    <property type="evidence" value="ECO:0007669"/>
    <property type="project" value="InterPro"/>
</dbReference>
<dbReference type="GO" id="GO:0000400">
    <property type="term" value="F:four-way junction DNA binding"/>
    <property type="evidence" value="ECO:0007669"/>
    <property type="project" value="UniProtKB-UniRule"/>
</dbReference>
<dbReference type="GO" id="GO:0009378">
    <property type="term" value="F:four-way junction helicase activity"/>
    <property type="evidence" value="ECO:0007669"/>
    <property type="project" value="InterPro"/>
</dbReference>
<dbReference type="GO" id="GO:0006310">
    <property type="term" value="P:DNA recombination"/>
    <property type="evidence" value="ECO:0007669"/>
    <property type="project" value="UniProtKB-UniRule"/>
</dbReference>
<dbReference type="GO" id="GO:0006281">
    <property type="term" value="P:DNA repair"/>
    <property type="evidence" value="ECO:0007669"/>
    <property type="project" value="UniProtKB-UniRule"/>
</dbReference>
<dbReference type="CDD" id="cd14332">
    <property type="entry name" value="UBA_RuvA_C"/>
    <property type="match status" value="1"/>
</dbReference>
<dbReference type="Gene3D" id="1.10.150.20">
    <property type="entry name" value="5' to 3' exonuclease, C-terminal subdomain"/>
    <property type="match status" value="1"/>
</dbReference>
<dbReference type="Gene3D" id="1.10.8.10">
    <property type="entry name" value="DNA helicase RuvA subunit, C-terminal domain"/>
    <property type="match status" value="1"/>
</dbReference>
<dbReference type="Gene3D" id="2.40.50.140">
    <property type="entry name" value="Nucleic acid-binding proteins"/>
    <property type="match status" value="1"/>
</dbReference>
<dbReference type="HAMAP" id="MF_00031">
    <property type="entry name" value="DNA_HJ_migration_RuvA"/>
    <property type="match status" value="1"/>
</dbReference>
<dbReference type="InterPro" id="IPR013849">
    <property type="entry name" value="DNA_helicase_Holl-junc_RuvA_I"/>
</dbReference>
<dbReference type="InterPro" id="IPR003583">
    <property type="entry name" value="Hlx-hairpin-Hlx_DNA-bd_motif"/>
</dbReference>
<dbReference type="InterPro" id="IPR012340">
    <property type="entry name" value="NA-bd_OB-fold"/>
</dbReference>
<dbReference type="InterPro" id="IPR000085">
    <property type="entry name" value="RuvA"/>
</dbReference>
<dbReference type="InterPro" id="IPR010994">
    <property type="entry name" value="RuvA_2-like"/>
</dbReference>
<dbReference type="InterPro" id="IPR011114">
    <property type="entry name" value="RuvA_C"/>
</dbReference>
<dbReference type="InterPro" id="IPR036267">
    <property type="entry name" value="RuvA_C_sf"/>
</dbReference>
<dbReference type="NCBIfam" id="TIGR00084">
    <property type="entry name" value="ruvA"/>
    <property type="match status" value="1"/>
</dbReference>
<dbReference type="Pfam" id="PF14520">
    <property type="entry name" value="HHH_5"/>
    <property type="match status" value="1"/>
</dbReference>
<dbReference type="Pfam" id="PF07499">
    <property type="entry name" value="RuvA_C"/>
    <property type="match status" value="1"/>
</dbReference>
<dbReference type="Pfam" id="PF01330">
    <property type="entry name" value="RuvA_N"/>
    <property type="match status" value="1"/>
</dbReference>
<dbReference type="SMART" id="SM00278">
    <property type="entry name" value="HhH1"/>
    <property type="match status" value="2"/>
</dbReference>
<dbReference type="SUPFAM" id="SSF46929">
    <property type="entry name" value="DNA helicase RuvA subunit, C-terminal domain"/>
    <property type="match status" value="1"/>
</dbReference>
<dbReference type="SUPFAM" id="SSF50249">
    <property type="entry name" value="Nucleic acid-binding proteins"/>
    <property type="match status" value="1"/>
</dbReference>
<dbReference type="SUPFAM" id="SSF47781">
    <property type="entry name" value="RuvA domain 2-like"/>
    <property type="match status" value="1"/>
</dbReference>
<evidence type="ECO:0000255" key="1">
    <source>
        <dbReference type="HAMAP-Rule" id="MF_00031"/>
    </source>
</evidence>
<name>RUVA_ACIC5</name>
<keyword id="KW-0963">Cytoplasm</keyword>
<keyword id="KW-0227">DNA damage</keyword>
<keyword id="KW-0233">DNA recombination</keyword>
<keyword id="KW-0234">DNA repair</keyword>
<keyword id="KW-0238">DNA-binding</keyword>
<keyword id="KW-1185">Reference proteome</keyword>
<protein>
    <recommendedName>
        <fullName evidence="1">Holliday junction branch migration complex subunit RuvA</fullName>
    </recommendedName>
</protein>
<feature type="chain" id="PRO_1000195105" description="Holliday junction branch migration complex subunit RuvA">
    <location>
        <begin position="1"/>
        <end position="198"/>
    </location>
</feature>
<feature type="region of interest" description="Domain I" evidence="1">
    <location>
        <begin position="1"/>
        <end position="64"/>
    </location>
</feature>
<feature type="region of interest" description="Domain II" evidence="1">
    <location>
        <begin position="65"/>
        <end position="141"/>
    </location>
</feature>
<feature type="region of interest" description="Flexible linker" evidence="1">
    <location>
        <begin position="141"/>
        <end position="145"/>
    </location>
</feature>
<feature type="region of interest" description="Domain III" evidence="1">
    <location>
        <begin position="146"/>
        <end position="198"/>
    </location>
</feature>
<reference key="1">
    <citation type="journal article" date="2009" name="Appl. Environ. Microbiol.">
        <title>Three genomes from the phylum Acidobacteria provide insight into the lifestyles of these microorganisms in soils.</title>
        <authorList>
            <person name="Ward N.L."/>
            <person name="Challacombe J.F."/>
            <person name="Janssen P.H."/>
            <person name="Henrissat B."/>
            <person name="Coutinho P.M."/>
            <person name="Wu M."/>
            <person name="Xie G."/>
            <person name="Haft D.H."/>
            <person name="Sait M."/>
            <person name="Badger J."/>
            <person name="Barabote R.D."/>
            <person name="Bradley B."/>
            <person name="Brettin T.S."/>
            <person name="Brinkac L.M."/>
            <person name="Bruce D."/>
            <person name="Creasy T."/>
            <person name="Daugherty S.C."/>
            <person name="Davidsen T.M."/>
            <person name="DeBoy R.T."/>
            <person name="Detter J.C."/>
            <person name="Dodson R.J."/>
            <person name="Durkin A.S."/>
            <person name="Ganapathy A."/>
            <person name="Gwinn-Giglio M."/>
            <person name="Han C.S."/>
            <person name="Khouri H."/>
            <person name="Kiss H."/>
            <person name="Kothari S.P."/>
            <person name="Madupu R."/>
            <person name="Nelson K.E."/>
            <person name="Nelson W.C."/>
            <person name="Paulsen I."/>
            <person name="Penn K."/>
            <person name="Ren Q."/>
            <person name="Rosovitz M.J."/>
            <person name="Selengut J.D."/>
            <person name="Shrivastava S."/>
            <person name="Sullivan S.A."/>
            <person name="Tapia R."/>
            <person name="Thompson L.S."/>
            <person name="Watkins K.L."/>
            <person name="Yang Q."/>
            <person name="Yu C."/>
            <person name="Zafar N."/>
            <person name="Zhou L."/>
            <person name="Kuske C.R."/>
        </authorList>
    </citation>
    <scope>NUCLEOTIDE SEQUENCE [LARGE SCALE GENOMIC DNA]</scope>
    <source>
        <strain>ATCC 51196 / DSM 11244 / BCRC 80197 / JCM 7670 / NBRC 15755 / NCIMB 13165 / 161</strain>
    </source>
</reference>
<sequence length="198" mass="20903">MIAHLRGTLLSKQPGQAIVECAGVGYDVAISVPTFTALPAEGAEVRLHIHTQVSEDAIALFGFLDREEKRLFERLITVSGVGPKLAIKMLSGLSPERTVAALRAQDHASLTRIPGVGKKLAERLVVELKDKLDDLIAAAPAAGPVAAGPAAEDVLSALLNLGYQRPAALKAIETAVEKDAAAGEDFDLLFRAALKLIR</sequence>
<accession>C1F8Z2</accession>
<proteinExistence type="inferred from homology"/>
<gene>
    <name evidence="1" type="primary">ruvA</name>
    <name type="ordered locus">ACP_2054</name>
</gene>